<comment type="subcellular location">
    <subcellularLocation>
        <location evidence="1">Virion tegument</location>
    </subcellularLocation>
    <subcellularLocation>
        <location evidence="1">Host nucleus matrix</location>
    </subcellularLocation>
</comment>
<comment type="similarity">
    <text evidence="3">Belongs to the alphaherpesvirinae HHV-1 UL55 family.</text>
</comment>
<sequence>MLPANRAEHSSDAEPRDIGSHGRNHGGCYSSDCKLGLLVDISNVVSPLPLDLTWSSWETTSQPARSRSYLNTRTYTIRACCDLQTRLHAFFIGVFEKRDPEKQILLPDLTNFKCILNNPRIMQELATEHSVCSAPFSAATQYDCDEDGEESTINGLCFHCHCKTPFSLECWQAANSAQAKILSVARGITSAKERQRENKR</sequence>
<dbReference type="EMBL" id="AY665713">
    <property type="protein sequence ID" value="AAT67261.1"/>
    <property type="molecule type" value="Genomic_DNA"/>
</dbReference>
<dbReference type="PIR" id="E36795">
    <property type="entry name" value="WZBEA3"/>
</dbReference>
<dbReference type="KEGG" id="vg:1487549"/>
<dbReference type="Proteomes" id="UP000001189">
    <property type="component" value="Segment"/>
</dbReference>
<dbReference type="GO" id="GO:0044204">
    <property type="term" value="C:host cell nuclear matrix"/>
    <property type="evidence" value="ECO:0007669"/>
    <property type="project" value="UniProtKB-SubCell"/>
</dbReference>
<dbReference type="GO" id="GO:0019033">
    <property type="term" value="C:viral tegument"/>
    <property type="evidence" value="ECO:0007669"/>
    <property type="project" value="UniProtKB-SubCell"/>
</dbReference>
<dbReference type="GO" id="GO:0019058">
    <property type="term" value="P:viral life cycle"/>
    <property type="evidence" value="ECO:0007669"/>
    <property type="project" value="InterPro"/>
</dbReference>
<dbReference type="InterPro" id="IPR007622">
    <property type="entry name" value="Herpes_UL55"/>
</dbReference>
<dbReference type="Pfam" id="PF04537">
    <property type="entry name" value="Herpes_UL55"/>
    <property type="match status" value="1"/>
</dbReference>
<reference key="1">
    <citation type="journal article" date="1992" name="Virology">
        <title>The DNA sequence of equine herpesvirus-1.</title>
        <authorList>
            <person name="Telford E.A.R."/>
            <person name="Watson M.S."/>
            <person name="McBride K."/>
            <person name="Davison A.J."/>
        </authorList>
    </citation>
    <scope>NUCLEOTIDE SEQUENCE [LARGE SCALE GENOMIC DNA]</scope>
</reference>
<protein>
    <recommendedName>
        <fullName>Tegument protein UL55 homolog</fullName>
    </recommendedName>
</protein>
<gene>
    <name type="ordered locus">4</name>
</gene>
<feature type="chain" id="PRO_0000116120" description="Tegument protein UL55 homolog">
    <location>
        <begin position="1"/>
        <end position="200"/>
    </location>
</feature>
<feature type="region of interest" description="Disordered" evidence="2">
    <location>
        <begin position="1"/>
        <end position="23"/>
    </location>
</feature>
<feature type="compositionally biased region" description="Basic and acidic residues" evidence="2">
    <location>
        <begin position="1"/>
        <end position="20"/>
    </location>
</feature>
<name>TEG6_EHV1B</name>
<evidence type="ECO:0000250" key="1"/>
<evidence type="ECO:0000256" key="2">
    <source>
        <dbReference type="SAM" id="MobiDB-lite"/>
    </source>
</evidence>
<evidence type="ECO:0000305" key="3"/>
<organism>
    <name type="scientific">Equine herpesvirus 1 (strain Ab4p)</name>
    <name type="common">EHV-1</name>
    <name type="synonym">Equine abortion virus</name>
    <dbReference type="NCBI Taxonomy" id="31520"/>
    <lineage>
        <taxon>Viruses</taxon>
        <taxon>Duplodnaviria</taxon>
        <taxon>Heunggongvirae</taxon>
        <taxon>Peploviricota</taxon>
        <taxon>Herviviricetes</taxon>
        <taxon>Herpesvirales</taxon>
        <taxon>Orthoherpesviridae</taxon>
        <taxon>Alphaherpesvirinae</taxon>
        <taxon>Varicellovirus</taxon>
        <taxon>Varicellovirus equidalpha1</taxon>
        <taxon>Equid alphaherpesvirus 1</taxon>
    </lineage>
</organism>
<organismHost>
    <name type="scientific">Equus caballus</name>
    <name type="common">Horse</name>
    <dbReference type="NCBI Taxonomy" id="9796"/>
</organismHost>
<keyword id="KW-1048">Host nucleus</keyword>
<keyword id="KW-1185">Reference proteome</keyword>
<keyword id="KW-0946">Virion</keyword>
<keyword id="KW-0920">Virion tegument</keyword>
<proteinExistence type="inferred from homology"/>
<accession>Q6S6R7</accession>
<accession>P28963</accession>